<organism>
    <name type="scientific">Homo sapiens</name>
    <name type="common">Human</name>
    <dbReference type="NCBI Taxonomy" id="9606"/>
    <lineage>
        <taxon>Eukaryota</taxon>
        <taxon>Metazoa</taxon>
        <taxon>Chordata</taxon>
        <taxon>Craniata</taxon>
        <taxon>Vertebrata</taxon>
        <taxon>Euteleostomi</taxon>
        <taxon>Mammalia</taxon>
        <taxon>Eutheria</taxon>
        <taxon>Euarchontoglires</taxon>
        <taxon>Primates</taxon>
        <taxon>Haplorrhini</taxon>
        <taxon>Catarrhini</taxon>
        <taxon>Hominidae</taxon>
        <taxon>Homo</taxon>
    </lineage>
</organism>
<gene>
    <name type="primary">VPS8</name>
    <name type="synonym">KIAA0804</name>
</gene>
<reference key="1">
    <citation type="journal article" date="2004" name="Nat. Genet.">
        <title>Complete sequencing and characterization of 21,243 full-length human cDNAs.</title>
        <authorList>
            <person name="Ota T."/>
            <person name="Suzuki Y."/>
            <person name="Nishikawa T."/>
            <person name="Otsuki T."/>
            <person name="Sugiyama T."/>
            <person name="Irie R."/>
            <person name="Wakamatsu A."/>
            <person name="Hayashi K."/>
            <person name="Sato H."/>
            <person name="Nagai K."/>
            <person name="Kimura K."/>
            <person name="Makita H."/>
            <person name="Sekine M."/>
            <person name="Obayashi M."/>
            <person name="Nishi T."/>
            <person name="Shibahara T."/>
            <person name="Tanaka T."/>
            <person name="Ishii S."/>
            <person name="Yamamoto J."/>
            <person name="Saito K."/>
            <person name="Kawai Y."/>
            <person name="Isono Y."/>
            <person name="Nakamura Y."/>
            <person name="Nagahari K."/>
            <person name="Murakami K."/>
            <person name="Yasuda T."/>
            <person name="Iwayanagi T."/>
            <person name="Wagatsuma M."/>
            <person name="Shiratori A."/>
            <person name="Sudo H."/>
            <person name="Hosoiri T."/>
            <person name="Kaku Y."/>
            <person name="Kodaira H."/>
            <person name="Kondo H."/>
            <person name="Sugawara M."/>
            <person name="Takahashi M."/>
            <person name="Kanda K."/>
            <person name="Yokoi T."/>
            <person name="Furuya T."/>
            <person name="Kikkawa E."/>
            <person name="Omura Y."/>
            <person name="Abe K."/>
            <person name="Kamihara K."/>
            <person name="Katsuta N."/>
            <person name="Sato K."/>
            <person name="Tanikawa M."/>
            <person name="Yamazaki M."/>
            <person name="Ninomiya K."/>
            <person name="Ishibashi T."/>
            <person name="Yamashita H."/>
            <person name="Murakawa K."/>
            <person name="Fujimori K."/>
            <person name="Tanai H."/>
            <person name="Kimata M."/>
            <person name="Watanabe M."/>
            <person name="Hiraoka S."/>
            <person name="Chiba Y."/>
            <person name="Ishida S."/>
            <person name="Ono Y."/>
            <person name="Takiguchi S."/>
            <person name="Watanabe S."/>
            <person name="Yosida M."/>
            <person name="Hotuta T."/>
            <person name="Kusano J."/>
            <person name="Kanehori K."/>
            <person name="Takahashi-Fujii A."/>
            <person name="Hara H."/>
            <person name="Tanase T.-O."/>
            <person name="Nomura Y."/>
            <person name="Togiya S."/>
            <person name="Komai F."/>
            <person name="Hara R."/>
            <person name="Takeuchi K."/>
            <person name="Arita M."/>
            <person name="Imose N."/>
            <person name="Musashino K."/>
            <person name="Yuuki H."/>
            <person name="Oshima A."/>
            <person name="Sasaki N."/>
            <person name="Aotsuka S."/>
            <person name="Yoshikawa Y."/>
            <person name="Matsunawa H."/>
            <person name="Ichihara T."/>
            <person name="Shiohata N."/>
            <person name="Sano S."/>
            <person name="Moriya S."/>
            <person name="Momiyama H."/>
            <person name="Satoh N."/>
            <person name="Takami S."/>
            <person name="Terashima Y."/>
            <person name="Suzuki O."/>
            <person name="Nakagawa S."/>
            <person name="Senoh A."/>
            <person name="Mizoguchi H."/>
            <person name="Goto Y."/>
            <person name="Shimizu F."/>
            <person name="Wakebe H."/>
            <person name="Hishigaki H."/>
            <person name="Watanabe T."/>
            <person name="Sugiyama A."/>
            <person name="Takemoto M."/>
            <person name="Kawakami B."/>
            <person name="Yamazaki M."/>
            <person name="Watanabe K."/>
            <person name="Kumagai A."/>
            <person name="Itakura S."/>
            <person name="Fukuzumi Y."/>
            <person name="Fujimori Y."/>
            <person name="Komiyama M."/>
            <person name="Tashiro H."/>
            <person name="Tanigami A."/>
            <person name="Fujiwara T."/>
            <person name="Ono T."/>
            <person name="Yamada K."/>
            <person name="Fujii Y."/>
            <person name="Ozaki K."/>
            <person name="Hirao M."/>
            <person name="Ohmori Y."/>
            <person name="Kawabata A."/>
            <person name="Hikiji T."/>
            <person name="Kobatake N."/>
            <person name="Inagaki H."/>
            <person name="Ikema Y."/>
            <person name="Okamoto S."/>
            <person name="Okitani R."/>
            <person name="Kawakami T."/>
            <person name="Noguchi S."/>
            <person name="Itoh T."/>
            <person name="Shigeta K."/>
            <person name="Senba T."/>
            <person name="Matsumura K."/>
            <person name="Nakajima Y."/>
            <person name="Mizuno T."/>
            <person name="Morinaga M."/>
            <person name="Sasaki M."/>
            <person name="Togashi T."/>
            <person name="Oyama M."/>
            <person name="Hata H."/>
            <person name="Watanabe M."/>
            <person name="Komatsu T."/>
            <person name="Mizushima-Sugano J."/>
            <person name="Satoh T."/>
            <person name="Shirai Y."/>
            <person name="Takahashi Y."/>
            <person name="Nakagawa K."/>
            <person name="Okumura K."/>
            <person name="Nagase T."/>
            <person name="Nomura N."/>
            <person name="Kikuchi H."/>
            <person name="Masuho Y."/>
            <person name="Yamashita R."/>
            <person name="Nakai K."/>
            <person name="Yada T."/>
            <person name="Nakamura Y."/>
            <person name="Ohara O."/>
            <person name="Isogai T."/>
            <person name="Sugano S."/>
        </authorList>
    </citation>
    <scope>NUCLEOTIDE SEQUENCE [LARGE SCALE MRNA] (ISOFORM 3)</scope>
    <scope>NUCLEOTIDE SEQUENCE [LARGE SCALE MRNA] OF 608-1428 (ISOFORM 1)</scope>
    <source>
        <tissue>Teratocarcinoma</tissue>
        <tissue>Testis</tissue>
    </source>
</reference>
<reference key="2">
    <citation type="journal article" date="2007" name="BMC Genomics">
        <title>The full-ORF clone resource of the German cDNA consortium.</title>
        <authorList>
            <person name="Bechtel S."/>
            <person name="Rosenfelder H."/>
            <person name="Duda A."/>
            <person name="Schmidt C.P."/>
            <person name="Ernst U."/>
            <person name="Wellenreuther R."/>
            <person name="Mehrle A."/>
            <person name="Schuster C."/>
            <person name="Bahr A."/>
            <person name="Bloecker H."/>
            <person name="Heubner D."/>
            <person name="Hoerlein A."/>
            <person name="Michel G."/>
            <person name="Wedler H."/>
            <person name="Koehrer K."/>
            <person name="Ottenwaelder B."/>
            <person name="Poustka A."/>
            <person name="Wiemann S."/>
            <person name="Schupp I."/>
        </authorList>
    </citation>
    <scope>NUCLEOTIDE SEQUENCE [LARGE SCALE MRNA] (ISOFORM 2)</scope>
    <scope>NUCLEOTIDE SEQUENCE [LARGE SCALE MRNA] OF 100-1428 (ISOFORM 1)</scope>
    <scope>VARIANTS VAL-83 AND TYR-1165</scope>
    <source>
        <tissue>Amygdala</tissue>
        <tissue>Colon endothelium</tissue>
    </source>
</reference>
<reference key="3">
    <citation type="journal article" date="2006" name="Nature">
        <title>The DNA sequence, annotation and analysis of human chromosome 3.</title>
        <authorList>
            <person name="Muzny D.M."/>
            <person name="Scherer S.E."/>
            <person name="Kaul R."/>
            <person name="Wang J."/>
            <person name="Yu J."/>
            <person name="Sudbrak R."/>
            <person name="Buhay C.J."/>
            <person name="Chen R."/>
            <person name="Cree A."/>
            <person name="Ding Y."/>
            <person name="Dugan-Rocha S."/>
            <person name="Gill R."/>
            <person name="Gunaratne P."/>
            <person name="Harris R.A."/>
            <person name="Hawes A.C."/>
            <person name="Hernandez J."/>
            <person name="Hodgson A.V."/>
            <person name="Hume J."/>
            <person name="Jackson A."/>
            <person name="Khan Z.M."/>
            <person name="Kovar-Smith C."/>
            <person name="Lewis L.R."/>
            <person name="Lozado R.J."/>
            <person name="Metzker M.L."/>
            <person name="Milosavljevic A."/>
            <person name="Miner G.R."/>
            <person name="Morgan M.B."/>
            <person name="Nazareth L.V."/>
            <person name="Scott G."/>
            <person name="Sodergren E."/>
            <person name="Song X.-Z."/>
            <person name="Steffen D."/>
            <person name="Wei S."/>
            <person name="Wheeler D.A."/>
            <person name="Wright M.W."/>
            <person name="Worley K.C."/>
            <person name="Yuan Y."/>
            <person name="Zhang Z."/>
            <person name="Adams C.Q."/>
            <person name="Ansari-Lari M.A."/>
            <person name="Ayele M."/>
            <person name="Brown M.J."/>
            <person name="Chen G."/>
            <person name="Chen Z."/>
            <person name="Clendenning J."/>
            <person name="Clerc-Blankenburg K.P."/>
            <person name="Chen R."/>
            <person name="Chen Z."/>
            <person name="Davis C."/>
            <person name="Delgado O."/>
            <person name="Dinh H.H."/>
            <person name="Dong W."/>
            <person name="Draper H."/>
            <person name="Ernst S."/>
            <person name="Fu G."/>
            <person name="Gonzalez-Garay M.L."/>
            <person name="Garcia D.K."/>
            <person name="Gillett W."/>
            <person name="Gu J."/>
            <person name="Hao B."/>
            <person name="Haugen E."/>
            <person name="Havlak P."/>
            <person name="He X."/>
            <person name="Hennig S."/>
            <person name="Hu S."/>
            <person name="Huang W."/>
            <person name="Jackson L.R."/>
            <person name="Jacob L.S."/>
            <person name="Kelly S.H."/>
            <person name="Kube M."/>
            <person name="Levy R."/>
            <person name="Li Z."/>
            <person name="Liu B."/>
            <person name="Liu J."/>
            <person name="Liu W."/>
            <person name="Lu J."/>
            <person name="Maheshwari M."/>
            <person name="Nguyen B.-V."/>
            <person name="Okwuonu G.O."/>
            <person name="Palmeiri A."/>
            <person name="Pasternak S."/>
            <person name="Perez L.M."/>
            <person name="Phelps K.A."/>
            <person name="Plopper F.J."/>
            <person name="Qiang B."/>
            <person name="Raymond C."/>
            <person name="Rodriguez R."/>
            <person name="Saenphimmachak C."/>
            <person name="Santibanez J."/>
            <person name="Shen H."/>
            <person name="Shen Y."/>
            <person name="Subramanian S."/>
            <person name="Tabor P.E."/>
            <person name="Verduzco D."/>
            <person name="Waldron L."/>
            <person name="Wang J."/>
            <person name="Wang J."/>
            <person name="Wang Q."/>
            <person name="Williams G.A."/>
            <person name="Wong G.K.-S."/>
            <person name="Yao Z."/>
            <person name="Zhang J."/>
            <person name="Zhang X."/>
            <person name="Zhao G."/>
            <person name="Zhou J."/>
            <person name="Zhou Y."/>
            <person name="Nelson D."/>
            <person name="Lehrach H."/>
            <person name="Reinhardt R."/>
            <person name="Naylor S.L."/>
            <person name="Yang H."/>
            <person name="Olson M."/>
            <person name="Weinstock G."/>
            <person name="Gibbs R.A."/>
        </authorList>
    </citation>
    <scope>NUCLEOTIDE SEQUENCE [LARGE SCALE GENOMIC DNA]</scope>
</reference>
<reference key="4">
    <citation type="journal article" date="2004" name="Genome Res.">
        <title>The status, quality, and expansion of the NIH full-length cDNA project: the Mammalian Gene Collection (MGC).</title>
        <authorList>
            <consortium name="The MGC Project Team"/>
        </authorList>
    </citation>
    <scope>NUCLEOTIDE SEQUENCE [LARGE SCALE MRNA] (ISOFORM 1)</scope>
    <source>
        <tissue>Brain</tissue>
        <tissue>Placenta</tissue>
    </source>
</reference>
<reference key="5">
    <citation type="journal article" date="1998" name="DNA Res.">
        <title>Prediction of the coding sequences of unidentified human genes. XI. The complete sequences of 100 new cDNA clones from brain which code for large proteins in vitro.</title>
        <authorList>
            <person name="Nagase T."/>
            <person name="Ishikawa K."/>
            <person name="Suyama M."/>
            <person name="Kikuno R."/>
            <person name="Miyajima N."/>
            <person name="Tanaka A."/>
            <person name="Kotani H."/>
            <person name="Nomura N."/>
            <person name="Ohara O."/>
        </authorList>
    </citation>
    <scope>NUCLEOTIDE SEQUENCE [LARGE SCALE MRNA] OF 218-1428 (ISOFORM 1)</scope>
    <source>
        <tissue>Brain</tissue>
    </source>
</reference>
<reference key="6">
    <citation type="journal article" date="2008" name="Proc. Natl. Acad. Sci. U.S.A.">
        <title>A quantitative atlas of mitotic phosphorylation.</title>
        <authorList>
            <person name="Dephoure N."/>
            <person name="Zhou C."/>
            <person name="Villen J."/>
            <person name="Beausoleil S.A."/>
            <person name="Bakalarski C.E."/>
            <person name="Elledge S.J."/>
            <person name="Gygi S.P."/>
        </authorList>
    </citation>
    <scope>PHOSPHORYLATION [LARGE SCALE ANALYSIS] AT SER-26</scope>
    <scope>IDENTIFICATION BY MASS SPECTROMETRY [LARGE SCALE ANALYSIS]</scope>
    <source>
        <tissue>Cervix carcinoma</tissue>
    </source>
</reference>
<reference key="7">
    <citation type="journal article" date="2010" name="Sci. Signal.">
        <title>Quantitative phosphoproteomics reveals widespread full phosphorylation site occupancy during mitosis.</title>
        <authorList>
            <person name="Olsen J.V."/>
            <person name="Vermeulen M."/>
            <person name="Santamaria A."/>
            <person name="Kumar C."/>
            <person name="Miller M.L."/>
            <person name="Jensen L.J."/>
            <person name="Gnad F."/>
            <person name="Cox J."/>
            <person name="Jensen T.S."/>
            <person name="Nigg E.A."/>
            <person name="Brunak S."/>
            <person name="Mann M."/>
        </authorList>
    </citation>
    <scope>PHOSPHORYLATION [LARGE SCALE ANALYSIS] AT SER-26</scope>
    <scope>IDENTIFICATION BY MASS SPECTROMETRY [LARGE SCALE ANALYSIS]</scope>
    <source>
        <tissue>Cervix carcinoma</tissue>
    </source>
</reference>
<reference key="8">
    <citation type="journal article" date="2011" name="Sci. Signal.">
        <title>System-wide temporal characterization of the proteome and phosphoproteome of human embryonic stem cell differentiation.</title>
        <authorList>
            <person name="Rigbolt K.T."/>
            <person name="Prokhorova T.A."/>
            <person name="Akimov V."/>
            <person name="Henningsen J."/>
            <person name="Johansen P.T."/>
            <person name="Kratchmarova I."/>
            <person name="Kassem M."/>
            <person name="Mann M."/>
            <person name="Olsen J.V."/>
            <person name="Blagoev B."/>
        </authorList>
    </citation>
    <scope>PHOSPHORYLATION [LARGE SCALE ANALYSIS] AT SER-26</scope>
    <scope>IDENTIFICATION BY MASS SPECTROMETRY [LARGE SCALE ANALYSIS]</scope>
</reference>
<reference key="9">
    <citation type="journal article" date="2013" name="J. Proteome Res.">
        <title>Toward a comprehensive characterization of a human cancer cell phosphoproteome.</title>
        <authorList>
            <person name="Zhou H."/>
            <person name="Di Palma S."/>
            <person name="Preisinger C."/>
            <person name="Peng M."/>
            <person name="Polat A.N."/>
            <person name="Heck A.J."/>
            <person name="Mohammed S."/>
        </authorList>
    </citation>
    <scope>PHOSPHORYLATION [LARGE SCALE ANALYSIS] AT SER-26; SER-32 AND SER-127</scope>
    <scope>IDENTIFICATION BY MASS SPECTROMETRY [LARGE SCALE ANALYSIS]</scope>
    <source>
        <tissue>Cervix carcinoma</tissue>
        <tissue>Erythroleukemia</tissue>
    </source>
</reference>
<reference key="10">
    <citation type="journal article" date="2014" name="Traffic">
        <title>Mammalian CORVET is required for fusion and conversion of distinct early endosome subpopulations.</title>
        <authorList>
            <person name="Perini E.D."/>
            <person name="Schaefer R."/>
            <person name="Stoeter M."/>
            <person name="Kalaidzidis Y."/>
            <person name="Zerial M."/>
        </authorList>
    </citation>
    <scope>FUNCTION OF THE CORVET COMPLEX</scope>
    <scope>INTERACTION WITH TGFBRAP1</scope>
    <scope>SUBUNIT</scope>
    <scope>SUBCELLULAR LOCATION</scope>
</reference>
<name>VPS8_HUMAN</name>
<comment type="function">
    <text evidence="5 9">Plays a role in vesicle-mediated protein trafficking of the endocytic membrane transport pathway. Believed to act as a component of the putative CORVET endosomal tethering complexes which is proposed to be involved in the Rab5-to-Rab7 endosome conversion probably implicating MON1A/B, and via binding SNAREs and SNARE complexes to mediate tethering and docking events during SNARE-mediated membrane fusion. The CORVET complex is proposed to function as a Rab5 effector to mediate early endosome fusion probably in specific endosome subpopulations (PubMed:25266290). Functions predominantly in APPL1-containing endosomes (PubMed:25266290).</text>
</comment>
<comment type="subunit">
    <text evidence="1 5 9">Interacts with RAB5C (By similarity). Interacts with TGFBRAP1 (PubMed:25266290). Component of the putative class C core vacuole/endosome tethering (CORVET) complex; the core of which composed of the class C Vps proteins VPS11, VPS16, VPS18 and VPS33A, is associated with VPS8 and TGFBRAP1 (PubMed:25266290).</text>
</comment>
<comment type="interaction">
    <interactant intactId="EBI-7261494">
        <id>Q8N3P4</id>
    </interactant>
    <interactant intactId="EBI-2954829">
        <id>Q8WUH2</id>
        <label>TGFBRAP1</label>
    </interactant>
    <organismsDiffer>false</organismsDiffer>
    <experiments>5</experiments>
</comment>
<comment type="subcellular location">
    <subcellularLocation>
        <location evidence="5">Early endosome</location>
    </subcellularLocation>
</comment>
<comment type="alternative products">
    <event type="alternative splicing"/>
    <isoform>
        <id>Q8N3P4-1</id>
        <name>1</name>
        <sequence type="displayed"/>
    </isoform>
    <isoform>
        <id>Q8N3P4-2</id>
        <name>2</name>
        <sequence type="described" ref="VSP_023249 VSP_023250"/>
    </isoform>
    <isoform>
        <id>Q8N3P4-3</id>
        <name>3</name>
        <sequence type="described" ref="VSP_023249"/>
    </isoform>
</comment>
<comment type="similarity">
    <text evidence="8">Belongs to the VPS8 family.</text>
</comment>
<comment type="sequence caution" evidence="8">
    <conflict type="erroneous initiation">
        <sequence resource="EMBL-CDS" id="BAB14322"/>
    </conflict>
    <text>Truncated N-terminus.</text>
</comment>
<comment type="sequence caution" evidence="8">
    <conflict type="frameshift">
        <sequence resource="EMBL-CDS" id="CAH56195"/>
    </conflict>
</comment>
<comment type="sequence caution" evidence="8">
    <molecule>Isoform 2</molecule>
    <conflict type="frameshift">
        <sequence resource="EMBL-CDS" id="CAH56195"/>
    </conflict>
</comment>
<sequence length="1428" mass="161754">MENEPDHENVEQSLCAKTSEEELNKSFNLEASLSKFSYIDMDKELEFKNDLIDDKEFDIPQVDTPPTLESILNETDDEDESFILEDPTLLNIDTIDSHSYDTSSVASSDSGDRTNLKRKKKLPDSFSLHGSVMRHSLLKGISAQIVSAADKVDAGLPTAIAVSSLIAVGTSHGLALIFGKDQNQALRLCLGSTSVGGQYGAISALSINNDCSRLLCGFAKGQITMWDLASGKLLRSITDAHPPGTAILHIKFTDDPTLAICNDSGGSVFELTFKRVMGVRTCESRCLFSGSKGEVCCIEPLHSKPELKDHPITQFSLLAMASLTKILVIGLKPSLKVWMTFPYGRMDPSSVPLLAWHFVAVQNYVNPMLAFCRGDVVHFLLVKRDESGAIHVTKQKHLHLYYDLINFTWINSRTVVLLDSVEKLHVIDRQTQEELETVEISEVQLVYNSSHFKSLATGGNVSQALALVGEKACYQSISSYGGQIFYLGTKSVYVMMLRSWRERVDHLLKQDCLTEALALAWSFHEGKAKAVVGLSGDASKRKAIVADRMVEILFHYADRALKKCPDQGKIQVMEQHFQDMVPVIVDYCLLLQRKDLLFSQMYDKLSENSVAKGVFLECLEPYILSDKLVGITPQVMKDLIVHFQDKKLMENVEALIVHMDITSLDIQQVVLMCWENRLYDAMIYVYNRGMNEFISPMEKLFRVIAPPLNAGKTLTDEQVVMGNKLLVYISCCLAGRAYPLGDIPEDLVPLVKNQVFEFLIRLHSAEASPEEEIYPYIRTLLHFDTREFLNVLALTFEDFKNDKQAVEYQQRIVDILLKVMVENSDFTPSQVGCLFTFLARQLAKPDNTLFVNRTLFDQVLEFLCSPDDDSRHSERQQVLLELLQAGGIVQFEESRLIRMAEKAEFYQICEFMYEREHQYDKIIDCYLRDPLREEEVFNYIHNILSIPGHSAEEKQSVWQKAMDHIEELVSLKPCKAAELVATHFSGHIETVIKKLQNQVLLFKFLRSLLDPREGIHVNQELLQISPCITEQFIELLCQFNPTQVIETLQVLECYRLEETIQITQKYQLHEVTAYLLEKKGDIHGAFLIMLERLQSKLQEVTHQGENTKEDPSLKDVEDTMVETIALCQRNSHNLNQQQREALWFPLLEAMMAPQKLSSSAIPHLHSEALKSLTMQVLNSMAAFIALPSILQRILQDPVYGKGKLGEIQGLILGMLDTFNYEQTLLETTTSLLNQDLHWSLCNLRASVTRGLNPKQDYCSICLQQYKRRQEMADEIIVFSCGHLYHSFCLQNKECTVEFEGQTRWTCYKCSSSNKVGKLSENSSEIKKGRITPSQVKMSPSYHQSKGDPTAKKGTSEPVLDPQQIQAFDQLCRLYRGSSRLALLTELSQNRSSESYRPFSGSQSAPAFNSIFQNENFQLQLIPPPVTED</sequence>
<proteinExistence type="evidence at protein level"/>
<accession>Q8N3P4</accession>
<accession>A8K8Q8</accession>
<accession>B9EIQ1</accession>
<accession>C9JB61</accession>
<accession>O94896</accession>
<accession>Q63HP2</accession>
<accession>Q9BVP9</accession>
<accession>Q9H9B0</accession>
<evidence type="ECO:0000250" key="1">
    <source>
        <dbReference type="UniProtKB" id="Q0P5W1"/>
    </source>
</evidence>
<evidence type="ECO:0000255" key="2">
    <source>
        <dbReference type="PROSITE-ProRule" id="PRU00175"/>
    </source>
</evidence>
<evidence type="ECO:0000256" key="3">
    <source>
        <dbReference type="SAM" id="MobiDB-lite"/>
    </source>
</evidence>
<evidence type="ECO:0000269" key="4">
    <source>
    </source>
</evidence>
<evidence type="ECO:0000269" key="5">
    <source>
    </source>
</evidence>
<evidence type="ECO:0000303" key="6">
    <source>
    </source>
</evidence>
<evidence type="ECO:0000303" key="7">
    <source>
    </source>
</evidence>
<evidence type="ECO:0000305" key="8"/>
<evidence type="ECO:0000305" key="9">
    <source>
    </source>
</evidence>
<evidence type="ECO:0007744" key="10">
    <source>
    </source>
</evidence>
<evidence type="ECO:0007744" key="11">
    <source>
    </source>
</evidence>
<evidence type="ECO:0007744" key="12">
    <source>
    </source>
</evidence>
<evidence type="ECO:0007744" key="13">
    <source>
    </source>
</evidence>
<keyword id="KW-0025">Alternative splicing</keyword>
<keyword id="KW-0967">Endosome</keyword>
<keyword id="KW-0479">Metal-binding</keyword>
<keyword id="KW-0597">Phosphoprotein</keyword>
<keyword id="KW-0653">Protein transport</keyword>
<keyword id="KW-1267">Proteomics identification</keyword>
<keyword id="KW-1185">Reference proteome</keyword>
<keyword id="KW-0813">Transport</keyword>
<keyword id="KW-0853">WD repeat</keyword>
<keyword id="KW-0862">Zinc</keyword>
<keyword id="KW-0863">Zinc-finger</keyword>
<feature type="chain" id="PRO_0000278267" description="Vacuolar protein sorting-associated protein 8 homolog">
    <location>
        <begin position="1"/>
        <end position="1428"/>
    </location>
</feature>
<feature type="repeat" description="WD">
    <location>
        <begin position="195"/>
        <end position="236"/>
    </location>
</feature>
<feature type="zinc finger region" description="RING-type; atypical" evidence="2">
    <location>
        <begin position="1258"/>
        <end position="1310"/>
    </location>
</feature>
<feature type="region of interest" description="Disordered" evidence="3">
    <location>
        <begin position="1330"/>
        <end position="1356"/>
    </location>
</feature>
<feature type="compositionally biased region" description="Polar residues" evidence="3">
    <location>
        <begin position="1331"/>
        <end position="1343"/>
    </location>
</feature>
<feature type="compositionally biased region" description="Basic and acidic residues" evidence="3">
    <location>
        <begin position="1344"/>
        <end position="1354"/>
    </location>
</feature>
<feature type="modified residue" description="Phosphoserine" evidence="10 11 12 13">
    <location>
        <position position="26"/>
    </location>
</feature>
<feature type="modified residue" description="Phosphoserine" evidence="13">
    <location>
        <position position="32"/>
    </location>
</feature>
<feature type="modified residue" description="Phosphoserine" evidence="13">
    <location>
        <position position="127"/>
    </location>
</feature>
<feature type="splice variant" id="VSP_023249" description="In isoform 2 and isoform 3." evidence="6 7">
    <location>
        <begin position="179"/>
        <end position="180"/>
    </location>
</feature>
<feature type="splice variant" id="VSP_023250" description="In isoform 2." evidence="7">
    <location>
        <begin position="578"/>
        <end position="667"/>
    </location>
</feature>
<feature type="sequence variant" id="VAR_030730" description="In dbSNP:rs9830734." evidence="4">
    <original>I</original>
    <variation>V</variation>
    <location>
        <position position="83"/>
    </location>
</feature>
<feature type="sequence variant" id="VAR_030731" description="In dbSNP:rs11555405." evidence="4">
    <original>H</original>
    <variation>Y</variation>
    <location>
        <position position="1165"/>
    </location>
</feature>
<feature type="sequence variant" id="VAR_030732" description="In dbSNP:rs3821750.">
    <original>I</original>
    <variation>T</variation>
    <location>
        <position position="1364"/>
    </location>
</feature>
<feature type="sequence variant" id="VAR_030733" description="In dbSNP:rs16859527.">
    <original>R</original>
    <variation>H</variation>
    <location>
        <position position="1372"/>
    </location>
</feature>
<feature type="sequence conflict" description="In Ref. 2; CAH56195." evidence="8" ref="2">
    <original>E</original>
    <variation>G</variation>
    <location>
        <position position="433"/>
    </location>
</feature>
<feature type="sequence conflict" description="In Ref. 2; CAH56195." evidence="8" ref="2">
    <original>K</original>
    <variation>N</variation>
    <location>
        <position position="471"/>
    </location>
</feature>
<feature type="sequence conflict" description="In Ref. 1; BAB14322." evidence="8" ref="1">
    <original>A</original>
    <variation>S</variation>
    <location>
        <position position="765"/>
    </location>
</feature>
<feature type="sequence conflict" description="In Ref. 2; CAH56195." evidence="8" ref="2">
    <location>
        <position position="932"/>
    </location>
</feature>
<feature type="sequence conflict" description="In Ref. 1; BAB14322." evidence="8" ref="1">
    <original>T</original>
    <variation>A</variation>
    <location>
        <position position="1042"/>
    </location>
</feature>
<feature type="sequence conflict" description="In Ref. 2; CAH56195." evidence="8" ref="2">
    <original>Q</original>
    <variation>L</variation>
    <location>
        <position position="1043"/>
    </location>
</feature>
<feature type="sequence conflict" description="In Ref. 1; BAB14322." evidence="8" ref="1">
    <original>E</original>
    <variation>G</variation>
    <location>
        <position position="1167"/>
    </location>
</feature>
<protein>
    <recommendedName>
        <fullName>Vacuolar protein sorting-associated protein 8 homolog</fullName>
    </recommendedName>
</protein>
<dbReference type="EMBL" id="AK022945">
    <property type="protein sequence ID" value="BAB14322.1"/>
    <property type="status" value="ALT_INIT"/>
    <property type="molecule type" value="mRNA"/>
</dbReference>
<dbReference type="EMBL" id="AK292423">
    <property type="protein sequence ID" value="BAF85112.1"/>
    <property type="molecule type" value="mRNA"/>
</dbReference>
<dbReference type="EMBL" id="AL833838">
    <property type="protein sequence ID" value="CAD38698.1"/>
    <property type="molecule type" value="mRNA"/>
</dbReference>
<dbReference type="EMBL" id="BX647915">
    <property type="protein sequence ID" value="CAH56195.1"/>
    <property type="status" value="ALT_FRAME"/>
    <property type="molecule type" value="mRNA"/>
</dbReference>
<dbReference type="EMBL" id="AC025573">
    <property type="status" value="NOT_ANNOTATED_CDS"/>
    <property type="molecule type" value="Genomic_DNA"/>
</dbReference>
<dbReference type="EMBL" id="AC107294">
    <property type="status" value="NOT_ANNOTATED_CDS"/>
    <property type="molecule type" value="Genomic_DNA"/>
</dbReference>
<dbReference type="EMBL" id="AC117436">
    <property type="status" value="NOT_ANNOTATED_CDS"/>
    <property type="molecule type" value="Genomic_DNA"/>
</dbReference>
<dbReference type="EMBL" id="BC001001">
    <property type="protein sequence ID" value="AAH01001.2"/>
    <property type="molecule type" value="mRNA"/>
</dbReference>
<dbReference type="EMBL" id="BC140768">
    <property type="protein sequence ID" value="AAI40769.1"/>
    <property type="molecule type" value="mRNA"/>
</dbReference>
<dbReference type="EMBL" id="AB018347">
    <property type="protein sequence ID" value="BAA34524.1"/>
    <property type="molecule type" value="mRNA"/>
</dbReference>
<dbReference type="CCDS" id="CCDS46971.1">
    <molecule id="Q8N3P4-1"/>
</dbReference>
<dbReference type="CCDS" id="CCDS46972.1">
    <molecule id="Q8N3P4-3"/>
</dbReference>
<dbReference type="RefSeq" id="NP_001009921.1">
    <molecule id="Q8N3P4-1"/>
    <property type="nucleotide sequence ID" value="NM_001009921.3"/>
</dbReference>
<dbReference type="RefSeq" id="NP_001336221.1">
    <molecule id="Q8N3P4-1"/>
    <property type="nucleotide sequence ID" value="NM_001349292.2"/>
</dbReference>
<dbReference type="RefSeq" id="NP_001336222.1">
    <molecule id="Q8N3P4-1"/>
    <property type="nucleotide sequence ID" value="NM_001349293.2"/>
</dbReference>
<dbReference type="RefSeq" id="NP_001336223.1">
    <molecule id="Q8N3P4-1"/>
    <property type="nucleotide sequence ID" value="NM_001349294.2"/>
</dbReference>
<dbReference type="RefSeq" id="NP_001336224.1">
    <molecule id="Q8N3P4-1"/>
    <property type="nucleotide sequence ID" value="NM_001349295.1"/>
</dbReference>
<dbReference type="RefSeq" id="NP_056118.2">
    <molecule id="Q8N3P4-3"/>
    <property type="nucleotide sequence ID" value="NM_015303.4"/>
</dbReference>
<dbReference type="RefSeq" id="XP_005247308.1">
    <property type="nucleotide sequence ID" value="XM_005247251.3"/>
</dbReference>
<dbReference type="RefSeq" id="XP_024309194.1">
    <molecule id="Q8N3P4-1"/>
    <property type="nucleotide sequence ID" value="XM_024453426.2"/>
</dbReference>
<dbReference type="RefSeq" id="XP_024309196.1">
    <molecule id="Q8N3P4-3"/>
    <property type="nucleotide sequence ID" value="XM_024453428.2"/>
</dbReference>
<dbReference type="RefSeq" id="XP_047303777.1">
    <molecule id="Q8N3P4-1"/>
    <property type="nucleotide sequence ID" value="XM_047447821.1"/>
</dbReference>
<dbReference type="RefSeq" id="XP_047303778.1">
    <molecule id="Q8N3P4-1"/>
    <property type="nucleotide sequence ID" value="XM_047447822.1"/>
</dbReference>
<dbReference type="RefSeq" id="XP_047303779.1">
    <molecule id="Q8N3P4-3"/>
    <property type="nucleotide sequence ID" value="XM_047447823.1"/>
</dbReference>
<dbReference type="RefSeq" id="XP_047303780.1">
    <molecule id="Q8N3P4-3"/>
    <property type="nucleotide sequence ID" value="XM_047447824.1"/>
</dbReference>
<dbReference type="RefSeq" id="XP_047303781.1">
    <molecule id="Q8N3P4-3"/>
    <property type="nucleotide sequence ID" value="XM_047447825.1"/>
</dbReference>
<dbReference type="SMR" id="Q8N3P4"/>
<dbReference type="BioGRID" id="116937">
    <property type="interactions" value="64"/>
</dbReference>
<dbReference type="ComplexPortal" id="CPX-6213">
    <property type="entry name" value="CORVET tethering complex"/>
</dbReference>
<dbReference type="CORUM" id="Q8N3P4"/>
<dbReference type="FunCoup" id="Q8N3P4">
    <property type="interactions" value="2033"/>
</dbReference>
<dbReference type="IntAct" id="Q8N3P4">
    <property type="interactions" value="55"/>
</dbReference>
<dbReference type="MINT" id="Q8N3P4"/>
<dbReference type="STRING" id="9606.ENSP00000487164"/>
<dbReference type="TCDB" id="8.A.225.1.1">
    <property type="family name" value="the vacuolar protein sorting-associated protein (vps) family"/>
</dbReference>
<dbReference type="GlyGen" id="Q8N3P4">
    <property type="glycosylation" value="2 sites, 1 O-linked glycan (1 site)"/>
</dbReference>
<dbReference type="iPTMnet" id="Q8N3P4"/>
<dbReference type="MetOSite" id="Q8N3P4"/>
<dbReference type="PhosphoSitePlus" id="Q8N3P4"/>
<dbReference type="BioMuta" id="VPS8"/>
<dbReference type="DMDM" id="296452997"/>
<dbReference type="jPOST" id="Q8N3P4"/>
<dbReference type="MassIVE" id="Q8N3P4"/>
<dbReference type="PaxDb" id="9606-ENSP00000404704"/>
<dbReference type="PeptideAtlas" id="Q8N3P4"/>
<dbReference type="ProteomicsDB" id="71820">
    <molecule id="Q8N3P4-1"/>
</dbReference>
<dbReference type="ProteomicsDB" id="71821">
    <molecule id="Q8N3P4-2"/>
</dbReference>
<dbReference type="ProteomicsDB" id="71822">
    <molecule id="Q8N3P4-3"/>
</dbReference>
<dbReference type="Pumba" id="Q8N3P4"/>
<dbReference type="Antibodypedia" id="33827">
    <property type="antibodies" value="79 antibodies from 20 providers"/>
</dbReference>
<dbReference type="DNASU" id="23355"/>
<dbReference type="Ensembl" id="ENST00000436792.6">
    <molecule id="Q8N3P4-3"/>
    <property type="protein sequence ID" value="ENSP00000404704.2"/>
    <property type="gene ID" value="ENSG00000156931.16"/>
</dbReference>
<dbReference type="Ensembl" id="ENST00000446204.6">
    <molecule id="Q8N3P4-2"/>
    <property type="protein sequence ID" value="ENSP00000405483.2"/>
    <property type="gene ID" value="ENSG00000156931.16"/>
</dbReference>
<dbReference type="Ensembl" id="ENST00000625842.3">
    <molecule id="Q8N3P4-1"/>
    <property type="protein sequence ID" value="ENSP00000487164.1"/>
    <property type="gene ID" value="ENSG00000156931.16"/>
</dbReference>
<dbReference type="GeneID" id="23355"/>
<dbReference type="KEGG" id="hsa:23355"/>
<dbReference type="MANE-Select" id="ENST00000625842.3">
    <property type="protein sequence ID" value="ENSP00000487164.1"/>
    <property type="RefSeq nucleotide sequence ID" value="NM_001009921.3"/>
    <property type="RefSeq protein sequence ID" value="NP_001009921.1"/>
</dbReference>
<dbReference type="UCSC" id="uc003fpb.2">
    <molecule id="Q8N3P4-1"/>
    <property type="organism name" value="human"/>
</dbReference>
<dbReference type="AGR" id="HGNC:29122"/>
<dbReference type="CTD" id="23355"/>
<dbReference type="DisGeNET" id="23355"/>
<dbReference type="GeneCards" id="VPS8"/>
<dbReference type="HGNC" id="HGNC:29122">
    <property type="gene designation" value="VPS8"/>
</dbReference>
<dbReference type="HPA" id="ENSG00000156931">
    <property type="expression patterns" value="Low tissue specificity"/>
</dbReference>
<dbReference type="MIM" id="618366">
    <property type="type" value="gene"/>
</dbReference>
<dbReference type="neXtProt" id="NX_Q8N3P4"/>
<dbReference type="OpenTargets" id="ENSG00000156931"/>
<dbReference type="PharmGKB" id="PA142671617"/>
<dbReference type="PharmGKB" id="PA142671888"/>
<dbReference type="VEuPathDB" id="HostDB:ENSG00000156931"/>
<dbReference type="eggNOG" id="KOG2079">
    <property type="taxonomic scope" value="Eukaryota"/>
</dbReference>
<dbReference type="GeneTree" id="ENSGT00390000010672"/>
<dbReference type="HOGENOM" id="CLU_000917_1_2_1"/>
<dbReference type="InParanoid" id="Q8N3P4"/>
<dbReference type="OMA" id="NQLFFHQ"/>
<dbReference type="OrthoDB" id="289913at2759"/>
<dbReference type="PAN-GO" id="Q8N3P4">
    <property type="GO annotations" value="3 GO annotations based on evolutionary models"/>
</dbReference>
<dbReference type="PhylomeDB" id="Q8N3P4"/>
<dbReference type="TreeFam" id="TF314244"/>
<dbReference type="PathwayCommons" id="Q8N3P4"/>
<dbReference type="SignaLink" id="Q8N3P4"/>
<dbReference type="SIGNOR" id="Q8N3P4"/>
<dbReference type="BioGRID-ORCS" id="23355">
    <property type="hits" value="42 hits in 1206 CRISPR screens"/>
</dbReference>
<dbReference type="CD-CODE" id="FB4E32DD">
    <property type="entry name" value="Presynaptic clusters and postsynaptic densities"/>
</dbReference>
<dbReference type="ChiTaRS" id="VPS8">
    <property type="organism name" value="human"/>
</dbReference>
<dbReference type="GenomeRNAi" id="23355"/>
<dbReference type="Pharos" id="Q8N3P4">
    <property type="development level" value="Tbio"/>
</dbReference>
<dbReference type="PRO" id="PR:Q8N3P4"/>
<dbReference type="Proteomes" id="UP000005640">
    <property type="component" value="Chromosome 3"/>
</dbReference>
<dbReference type="RNAct" id="Q8N3P4">
    <property type="molecule type" value="protein"/>
</dbReference>
<dbReference type="Bgee" id="ENSG00000156931">
    <property type="expression patterns" value="Expressed in adrenal tissue and 199 other cell types or tissues"/>
</dbReference>
<dbReference type="ExpressionAtlas" id="Q8N3P4">
    <property type="expression patterns" value="baseline and differential"/>
</dbReference>
<dbReference type="GO" id="GO:0033263">
    <property type="term" value="C:CORVET complex"/>
    <property type="evidence" value="ECO:0000318"/>
    <property type="project" value="GO_Central"/>
</dbReference>
<dbReference type="GO" id="GO:0005769">
    <property type="term" value="C:early endosome"/>
    <property type="evidence" value="ECO:0000314"/>
    <property type="project" value="UniProtKB"/>
</dbReference>
<dbReference type="GO" id="GO:0030897">
    <property type="term" value="C:HOPS complex"/>
    <property type="evidence" value="ECO:0000318"/>
    <property type="project" value="GO_Central"/>
</dbReference>
<dbReference type="GO" id="GO:0005770">
    <property type="term" value="C:late endosome"/>
    <property type="evidence" value="ECO:0000318"/>
    <property type="project" value="GO_Central"/>
</dbReference>
<dbReference type="GO" id="GO:0008270">
    <property type="term" value="F:zinc ion binding"/>
    <property type="evidence" value="ECO:0007669"/>
    <property type="project" value="UniProtKB-KW"/>
</dbReference>
<dbReference type="GO" id="GO:0034058">
    <property type="term" value="P:endosomal vesicle fusion"/>
    <property type="evidence" value="ECO:0000315"/>
    <property type="project" value="UniProtKB"/>
</dbReference>
<dbReference type="GO" id="GO:0006623">
    <property type="term" value="P:protein targeting to vacuole"/>
    <property type="evidence" value="ECO:0000318"/>
    <property type="project" value="GO_Central"/>
</dbReference>
<dbReference type="GO" id="GO:0035542">
    <property type="term" value="P:regulation of SNARE complex assembly"/>
    <property type="evidence" value="ECO:0000303"/>
    <property type="project" value="ComplexPortal"/>
</dbReference>
<dbReference type="CDD" id="cd16687">
    <property type="entry name" value="RING-H2_Vps8"/>
    <property type="match status" value="1"/>
</dbReference>
<dbReference type="FunFam" id="2.130.10.10:FF:000162">
    <property type="entry name" value="vacuolar protein sorting-associated protein 8 homolog"/>
    <property type="match status" value="1"/>
</dbReference>
<dbReference type="Gene3D" id="2.130.10.10">
    <property type="entry name" value="YVTN repeat-like/Quinoprotein amine dehydrogenase"/>
    <property type="match status" value="1"/>
</dbReference>
<dbReference type="Gene3D" id="3.30.40.10">
    <property type="entry name" value="Zinc/RING finger domain, C3HC4 (zinc finger)"/>
    <property type="match status" value="1"/>
</dbReference>
<dbReference type="InterPro" id="IPR011044">
    <property type="entry name" value="Quino_amine_DH_bsu"/>
</dbReference>
<dbReference type="InterPro" id="IPR045111">
    <property type="entry name" value="Vps41/Vps8"/>
</dbReference>
<dbReference type="InterPro" id="IPR025941">
    <property type="entry name" value="Vps8_central_dom"/>
</dbReference>
<dbReference type="InterPro" id="IPR015943">
    <property type="entry name" value="WD40/YVTN_repeat-like_dom_sf"/>
</dbReference>
<dbReference type="InterPro" id="IPR036322">
    <property type="entry name" value="WD40_repeat_dom_sf"/>
</dbReference>
<dbReference type="InterPro" id="IPR001680">
    <property type="entry name" value="WD40_rpt"/>
</dbReference>
<dbReference type="InterPro" id="IPR001841">
    <property type="entry name" value="Znf_RING"/>
</dbReference>
<dbReference type="InterPro" id="IPR013083">
    <property type="entry name" value="Znf_RING/FYVE/PHD"/>
</dbReference>
<dbReference type="InterPro" id="IPR056939">
    <property type="entry name" value="Znf_RING_Vps8"/>
</dbReference>
<dbReference type="PANTHER" id="PTHR12616">
    <property type="entry name" value="VACUOLAR PROTEIN SORTING VPS41"/>
    <property type="match status" value="1"/>
</dbReference>
<dbReference type="PANTHER" id="PTHR12616:SF8">
    <property type="entry name" value="VACUOLAR PROTEIN SORTING-ASSOCIATED PROTEIN 8 HOMOLOG"/>
    <property type="match status" value="1"/>
</dbReference>
<dbReference type="Pfam" id="PF23410">
    <property type="entry name" value="Beta-prop_VPS8"/>
    <property type="match status" value="1"/>
</dbReference>
<dbReference type="Pfam" id="PF23556">
    <property type="entry name" value="TPR_Vps41"/>
    <property type="match status" value="1"/>
</dbReference>
<dbReference type="Pfam" id="PF12816">
    <property type="entry name" value="TPR_Vps8"/>
    <property type="match status" value="1"/>
</dbReference>
<dbReference type="Pfam" id="PF23412">
    <property type="entry name" value="zf_RING_Vps8"/>
    <property type="match status" value="1"/>
</dbReference>
<dbReference type="SMART" id="SM00184">
    <property type="entry name" value="RING"/>
    <property type="match status" value="1"/>
</dbReference>
<dbReference type="SUPFAM" id="SSF57850">
    <property type="entry name" value="RING/U-box"/>
    <property type="match status" value="1"/>
</dbReference>
<dbReference type="SUPFAM" id="SSF50978">
    <property type="entry name" value="WD40 repeat-like"/>
    <property type="match status" value="1"/>
</dbReference>
<dbReference type="SUPFAM" id="SSF50969">
    <property type="entry name" value="YVTN repeat-like/Quinoprotein amine dehydrogenase"/>
    <property type="match status" value="1"/>
</dbReference>
<dbReference type="PROSITE" id="PS50082">
    <property type="entry name" value="WD_REPEATS_2"/>
    <property type="match status" value="1"/>
</dbReference>
<dbReference type="PROSITE" id="PS50294">
    <property type="entry name" value="WD_REPEATS_REGION"/>
    <property type="match status" value="1"/>
</dbReference>
<dbReference type="PROSITE" id="PS50089">
    <property type="entry name" value="ZF_RING_2"/>
    <property type="match status" value="1"/>
</dbReference>